<accession>O32003</accession>
<organism>
    <name type="scientific">Bacillus subtilis (strain 168)</name>
    <dbReference type="NCBI Taxonomy" id="224308"/>
    <lineage>
        <taxon>Bacteria</taxon>
        <taxon>Bacillati</taxon>
        <taxon>Bacillota</taxon>
        <taxon>Bacilli</taxon>
        <taxon>Bacillales</taxon>
        <taxon>Bacillaceae</taxon>
        <taxon>Bacillus</taxon>
    </lineage>
</organism>
<dbReference type="EC" id="2.3.1.-"/>
<dbReference type="EMBL" id="AL009126">
    <property type="protein sequence ID" value="CAB14081.1"/>
    <property type="molecule type" value="Genomic_DNA"/>
</dbReference>
<dbReference type="RefSeq" id="WP_004399070.1">
    <property type="nucleotide sequence ID" value="NZ_OZ025638.1"/>
</dbReference>
<dbReference type="PDB" id="2NYG">
    <property type="method" value="X-ray"/>
    <property type="resolution" value="2.60 A"/>
    <property type="chains" value="A/B/C/D/E/F=2-272"/>
</dbReference>
<dbReference type="PDBsum" id="2NYG"/>
<dbReference type="SMR" id="O32003"/>
<dbReference type="FunCoup" id="O32003">
    <property type="interactions" value="14"/>
</dbReference>
<dbReference type="STRING" id="224308.BSU21630"/>
<dbReference type="jPOST" id="O32003"/>
<dbReference type="PaxDb" id="224308-BSU21630"/>
<dbReference type="EnsemblBacteria" id="CAB14081">
    <property type="protein sequence ID" value="CAB14081"/>
    <property type="gene ID" value="BSU_21630"/>
</dbReference>
<dbReference type="GeneID" id="939106"/>
<dbReference type="KEGG" id="bsu:BSU21630"/>
<dbReference type="PATRIC" id="fig|224308.179.peg.2362"/>
<dbReference type="eggNOG" id="COG2746">
    <property type="taxonomic scope" value="Bacteria"/>
</dbReference>
<dbReference type="InParanoid" id="O32003"/>
<dbReference type="OrthoDB" id="7330654at2"/>
<dbReference type="PhylomeDB" id="O32003"/>
<dbReference type="BioCyc" id="BSUB:BSU21630-MONOMER"/>
<dbReference type="EvolutionaryTrace" id="O32003"/>
<dbReference type="Proteomes" id="UP000001570">
    <property type="component" value="Chromosome"/>
</dbReference>
<dbReference type="GO" id="GO:0008080">
    <property type="term" value="F:N-acetyltransferase activity"/>
    <property type="evidence" value="ECO:0007669"/>
    <property type="project" value="InterPro"/>
</dbReference>
<dbReference type="GO" id="GO:0046677">
    <property type="term" value="P:response to antibiotic"/>
    <property type="evidence" value="ECO:0007669"/>
    <property type="project" value="UniProtKB-KW"/>
</dbReference>
<dbReference type="InterPro" id="IPR003679">
    <property type="entry name" value="Amioglycoside_AcTrfase"/>
</dbReference>
<dbReference type="InterPro" id="IPR028345">
    <property type="entry name" value="Antibiotic_NAT-like"/>
</dbReference>
<dbReference type="PANTHER" id="PTHR11104">
    <property type="entry name" value="AMINOGLYCOSIDE N3-ACETYLTRANSFERASE"/>
    <property type="match status" value="1"/>
</dbReference>
<dbReference type="PANTHER" id="PTHR11104:SF0">
    <property type="entry name" value="SPBETA PROPHAGE-DERIVED AMINOGLYCOSIDE N(3')-ACETYLTRANSFERASE-LIKE PROTEIN YOKD"/>
    <property type="match status" value="1"/>
</dbReference>
<dbReference type="Pfam" id="PF02522">
    <property type="entry name" value="Antibiotic_NAT"/>
    <property type="match status" value="1"/>
</dbReference>
<dbReference type="SUPFAM" id="SSF110710">
    <property type="entry name" value="TTHA0583/YokD-like"/>
    <property type="match status" value="1"/>
</dbReference>
<keyword id="KW-0002">3D-structure</keyword>
<keyword id="KW-0012">Acyltransferase</keyword>
<keyword id="KW-0046">Antibiotic resistance</keyword>
<keyword id="KW-1185">Reference proteome</keyword>
<keyword id="KW-0808">Transferase</keyword>
<proteinExistence type="evidence at protein level"/>
<feature type="chain" id="PRO_0000360739" description="SPbeta prophage-derived aminoglycoside N(3')-acetyltransferase-like protein YokD">
    <location>
        <begin position="1"/>
        <end position="272"/>
    </location>
</feature>
<feature type="binding site">
    <location>
        <begin position="38"/>
        <end position="44"/>
    </location>
    <ligand>
        <name>CoA</name>
        <dbReference type="ChEBI" id="CHEBI:57287"/>
    </ligand>
</feature>
<feature type="binding site" evidence="1">
    <location>
        <position position="113"/>
    </location>
    <ligand>
        <name>CoA</name>
        <dbReference type="ChEBI" id="CHEBI:57287"/>
    </ligand>
</feature>
<feature type="helix" evidence="4">
    <location>
        <begin position="2"/>
        <end position="6"/>
    </location>
</feature>
<feature type="helix" evidence="4">
    <location>
        <begin position="14"/>
        <end position="24"/>
    </location>
</feature>
<feature type="strand" evidence="4">
    <location>
        <begin position="31"/>
        <end position="36"/>
    </location>
</feature>
<feature type="helix" evidence="4">
    <location>
        <begin position="39"/>
        <end position="41"/>
    </location>
</feature>
<feature type="helix" evidence="4">
    <location>
        <begin position="47"/>
        <end position="59"/>
    </location>
</feature>
<feature type="turn" evidence="4">
    <location>
        <begin position="60"/>
        <end position="62"/>
    </location>
</feature>
<feature type="strand" evidence="4">
    <location>
        <begin position="63"/>
        <end position="68"/>
    </location>
</feature>
<feature type="helix" evidence="4">
    <location>
        <begin position="77"/>
        <end position="79"/>
    </location>
</feature>
<feature type="helix" evidence="4">
    <location>
        <begin position="87"/>
        <end position="89"/>
    </location>
</feature>
<feature type="helix" evidence="4">
    <location>
        <begin position="92"/>
        <end position="95"/>
    </location>
</feature>
<feature type="turn" evidence="4">
    <location>
        <begin position="102"/>
        <end position="104"/>
    </location>
</feature>
<feature type="helix" evidence="4">
    <location>
        <begin position="109"/>
        <end position="111"/>
    </location>
</feature>
<feature type="helix" evidence="4">
    <location>
        <begin position="113"/>
        <end position="118"/>
    </location>
</feature>
<feature type="strand" evidence="4">
    <location>
        <begin position="130"/>
        <end position="132"/>
    </location>
</feature>
<feature type="strand" evidence="4">
    <location>
        <begin position="134"/>
        <end position="138"/>
    </location>
</feature>
<feature type="helix" evidence="4">
    <location>
        <begin position="141"/>
        <end position="145"/>
    </location>
</feature>
<feature type="strand" evidence="4">
    <location>
        <begin position="150"/>
        <end position="152"/>
    </location>
</feature>
<feature type="helix" evidence="4">
    <location>
        <begin position="159"/>
        <end position="165"/>
    </location>
</feature>
<feature type="strand" evidence="4">
    <location>
        <begin position="169"/>
        <end position="174"/>
    </location>
</feature>
<feature type="helix" evidence="4">
    <location>
        <begin position="177"/>
        <end position="179"/>
    </location>
</feature>
<feature type="helix" evidence="4">
    <location>
        <begin position="182"/>
        <end position="186"/>
    </location>
</feature>
<feature type="strand" evidence="4">
    <location>
        <begin position="189"/>
        <end position="191"/>
    </location>
</feature>
<feature type="strand" evidence="4">
    <location>
        <begin position="195"/>
        <end position="200"/>
    </location>
</feature>
<feature type="strand" evidence="4">
    <location>
        <begin position="211"/>
        <end position="216"/>
    </location>
</feature>
<feature type="helix" evidence="4">
    <location>
        <begin position="220"/>
        <end position="222"/>
    </location>
</feature>
<feature type="helix" evidence="4">
    <location>
        <begin position="223"/>
        <end position="233"/>
    </location>
</feature>
<feature type="strand" evidence="4">
    <location>
        <begin position="237"/>
        <end position="241"/>
    </location>
</feature>
<feature type="strand" evidence="4">
    <location>
        <begin position="244"/>
        <end position="250"/>
    </location>
</feature>
<feature type="helix" evidence="4">
    <location>
        <begin position="251"/>
        <end position="267"/>
    </location>
</feature>
<reference key="1">
    <citation type="journal article" date="1997" name="Nature">
        <title>The complete genome sequence of the Gram-positive bacterium Bacillus subtilis.</title>
        <authorList>
            <person name="Kunst F."/>
            <person name="Ogasawara N."/>
            <person name="Moszer I."/>
            <person name="Albertini A.M."/>
            <person name="Alloni G."/>
            <person name="Azevedo V."/>
            <person name="Bertero M.G."/>
            <person name="Bessieres P."/>
            <person name="Bolotin A."/>
            <person name="Borchert S."/>
            <person name="Borriss R."/>
            <person name="Boursier L."/>
            <person name="Brans A."/>
            <person name="Braun M."/>
            <person name="Brignell S.C."/>
            <person name="Bron S."/>
            <person name="Brouillet S."/>
            <person name="Bruschi C.V."/>
            <person name="Caldwell B."/>
            <person name="Capuano V."/>
            <person name="Carter N.M."/>
            <person name="Choi S.-K."/>
            <person name="Codani J.-J."/>
            <person name="Connerton I.F."/>
            <person name="Cummings N.J."/>
            <person name="Daniel R.A."/>
            <person name="Denizot F."/>
            <person name="Devine K.M."/>
            <person name="Duesterhoeft A."/>
            <person name="Ehrlich S.D."/>
            <person name="Emmerson P.T."/>
            <person name="Entian K.-D."/>
            <person name="Errington J."/>
            <person name="Fabret C."/>
            <person name="Ferrari E."/>
            <person name="Foulger D."/>
            <person name="Fritz C."/>
            <person name="Fujita M."/>
            <person name="Fujita Y."/>
            <person name="Fuma S."/>
            <person name="Galizzi A."/>
            <person name="Galleron N."/>
            <person name="Ghim S.-Y."/>
            <person name="Glaser P."/>
            <person name="Goffeau A."/>
            <person name="Golightly E.J."/>
            <person name="Grandi G."/>
            <person name="Guiseppi G."/>
            <person name="Guy B.J."/>
            <person name="Haga K."/>
            <person name="Haiech J."/>
            <person name="Harwood C.R."/>
            <person name="Henaut A."/>
            <person name="Hilbert H."/>
            <person name="Holsappel S."/>
            <person name="Hosono S."/>
            <person name="Hullo M.-F."/>
            <person name="Itaya M."/>
            <person name="Jones L.-M."/>
            <person name="Joris B."/>
            <person name="Karamata D."/>
            <person name="Kasahara Y."/>
            <person name="Klaerr-Blanchard M."/>
            <person name="Klein C."/>
            <person name="Kobayashi Y."/>
            <person name="Koetter P."/>
            <person name="Koningstein G."/>
            <person name="Krogh S."/>
            <person name="Kumano M."/>
            <person name="Kurita K."/>
            <person name="Lapidus A."/>
            <person name="Lardinois S."/>
            <person name="Lauber J."/>
            <person name="Lazarevic V."/>
            <person name="Lee S.-M."/>
            <person name="Levine A."/>
            <person name="Liu H."/>
            <person name="Masuda S."/>
            <person name="Mauel C."/>
            <person name="Medigue C."/>
            <person name="Medina N."/>
            <person name="Mellado R.P."/>
            <person name="Mizuno M."/>
            <person name="Moestl D."/>
            <person name="Nakai S."/>
            <person name="Noback M."/>
            <person name="Noone D."/>
            <person name="O'Reilly M."/>
            <person name="Ogawa K."/>
            <person name="Ogiwara A."/>
            <person name="Oudega B."/>
            <person name="Park S.-H."/>
            <person name="Parro V."/>
            <person name="Pohl T.M."/>
            <person name="Portetelle D."/>
            <person name="Porwollik S."/>
            <person name="Prescott A.M."/>
            <person name="Presecan E."/>
            <person name="Pujic P."/>
            <person name="Purnelle B."/>
            <person name="Rapoport G."/>
            <person name="Rey M."/>
            <person name="Reynolds S."/>
            <person name="Rieger M."/>
            <person name="Rivolta C."/>
            <person name="Rocha E."/>
            <person name="Roche B."/>
            <person name="Rose M."/>
            <person name="Sadaie Y."/>
            <person name="Sato T."/>
            <person name="Scanlan E."/>
            <person name="Schleich S."/>
            <person name="Schroeter R."/>
            <person name="Scoffone F."/>
            <person name="Sekiguchi J."/>
            <person name="Sekowska A."/>
            <person name="Seror S.J."/>
            <person name="Serror P."/>
            <person name="Shin B.-S."/>
            <person name="Soldo B."/>
            <person name="Sorokin A."/>
            <person name="Tacconi E."/>
            <person name="Takagi T."/>
            <person name="Takahashi H."/>
            <person name="Takemaru K."/>
            <person name="Takeuchi M."/>
            <person name="Tamakoshi A."/>
            <person name="Tanaka T."/>
            <person name="Terpstra P."/>
            <person name="Tognoni A."/>
            <person name="Tosato V."/>
            <person name="Uchiyama S."/>
            <person name="Vandenbol M."/>
            <person name="Vannier F."/>
            <person name="Vassarotti A."/>
            <person name="Viari A."/>
            <person name="Wambutt R."/>
            <person name="Wedler E."/>
            <person name="Wedler H."/>
            <person name="Weitzenegger T."/>
            <person name="Winters P."/>
            <person name="Wipat A."/>
            <person name="Yamamoto H."/>
            <person name="Yamane K."/>
            <person name="Yasumoto K."/>
            <person name="Yata K."/>
            <person name="Yoshida K."/>
            <person name="Yoshikawa H.-F."/>
            <person name="Zumstein E."/>
            <person name="Yoshikawa H."/>
            <person name="Danchin A."/>
        </authorList>
    </citation>
    <scope>NUCLEOTIDE SEQUENCE [LARGE SCALE GENOMIC DNA]</scope>
    <source>
        <strain>168</strain>
    </source>
</reference>
<reference key="2">
    <citation type="submission" date="2007-02" db="PDB data bank">
        <title>Crystal structure of yokD protein from Bacillus subtilis.</title>
        <authorList>
            <consortium name="New York structural genomix research consortium (NYSGXRC)"/>
        </authorList>
    </citation>
    <scope>X-RAY CRYSTALLOGRAPHY (2.6 ANGSTROMS) IN COMPLEX WITH COENZYME A</scope>
    <scope>SUBUNIT</scope>
</reference>
<sequence>MKKIVESTTFPRTKQSITEDLKALGLKKGMTVLVHSSLSSIGWVNGGAVAVIQALIDVVTEEGTIVMPSQSVELSDPKEWGNPPVPEEWWDIIRESMPAYNSNYTPTTRGMGQIVELFRSYPEVKRSNHPNYSFVAWGKHKNKILNQHPLEFGLGEQSPLGKLYIRESYVLLLGADFDSSTCFHLAEYRIPYQKIINRGAPIIVEGKRVWKEYKELEFREELFQEVGQAFEAEHNMKVGKVGSANCRLFSLTEAVDFAEKWFINNDSKNIKK</sequence>
<gene>
    <name type="primary">yokD</name>
    <name type="ordered locus">BSU21630</name>
</gene>
<evidence type="ECO:0000269" key="1">
    <source ref="2"/>
</evidence>
<evidence type="ECO:0000305" key="2"/>
<evidence type="ECO:0000305" key="3">
    <source ref="2"/>
</evidence>
<evidence type="ECO:0007829" key="4">
    <source>
        <dbReference type="PDB" id="2NYG"/>
    </source>
</evidence>
<name>YOKD_BACSU</name>
<comment type="function">
    <text evidence="2">May contribute to antibiotic resistance.</text>
</comment>
<comment type="subunit">
    <text evidence="3">Homodimer.</text>
</comment>
<comment type="similarity">
    <text evidence="2">Belongs to the antibiotic N-acetyltransferase family.</text>
</comment>
<protein>
    <recommendedName>
        <fullName>SPbeta prophage-derived aminoglycoside N(3')-acetyltransferase-like protein YokD</fullName>
        <ecNumber>2.3.1.-</ecNumber>
    </recommendedName>
</protein>